<reference key="1">
    <citation type="journal article" date="2000" name="Arch. Virol.">
        <title>Complete nucleotide sequence of Northern cereal mosaic virus and its genome organization.</title>
        <authorList>
            <person name="Tanno F."/>
            <person name="Nakatsu A."/>
            <person name="Toriyama S."/>
            <person name="Kojima M."/>
        </authorList>
    </citation>
    <scope>NUCLEOTIDE SEQUENCE [GENOMIC RNA]</scope>
</reference>
<feature type="signal peptide" evidence="2">
    <location>
        <begin position="1"/>
        <end position="21"/>
    </location>
</feature>
<feature type="chain" id="PRO_0000299234" description="Glycoprotein">
    <location>
        <begin position="22"/>
        <end position="483"/>
    </location>
</feature>
<feature type="topological domain" description="Virion surface" evidence="2">
    <location>
        <begin position="22"/>
        <end position="442"/>
    </location>
</feature>
<feature type="transmembrane region" description="Helical" evidence="2">
    <location>
        <begin position="443"/>
        <end position="463"/>
    </location>
</feature>
<feature type="topological domain" description="Intravirion" evidence="2">
    <location>
        <begin position="464"/>
        <end position="483"/>
    </location>
</feature>
<evidence type="ECO:0000250" key="1"/>
<evidence type="ECO:0000255" key="2"/>
<evidence type="ECO:0000305" key="3"/>
<name>GLYCO_NCMV</name>
<organismHost>
    <name type="scientific">Hordeum vulgare</name>
    <name type="common">Barley</name>
    <dbReference type="NCBI Taxonomy" id="4513"/>
</organismHost>
<accession>Q9JGT4</accession>
<protein>
    <recommendedName>
        <fullName>Glycoprotein</fullName>
    </recommendedName>
</protein>
<organism>
    <name type="scientific">Northern cereal mosaic virus</name>
    <name type="common">NCMV</name>
    <dbReference type="NCBI Taxonomy" id="1985704"/>
    <lineage>
        <taxon>Viruses</taxon>
        <taxon>Riboviria</taxon>
        <taxon>Orthornavirae</taxon>
        <taxon>Negarnaviricota</taxon>
        <taxon>Haploviricotina</taxon>
        <taxon>Monjiviricetes</taxon>
        <taxon>Mononegavirales</taxon>
        <taxon>Rhabdoviridae</taxon>
        <taxon>Betarhabdovirinae</taxon>
        <taxon>Cytorhabdovirus</taxon>
    </lineage>
</organism>
<proteinExistence type="inferred from homology"/>
<sequence length="483" mass="54118">MQKLSLVWIITLSVSVITGDGLSILSCNKTDEVPTVTQCFKSCSDTILGEQVKVSILSQEDPTSIVVGRCIWRIMKQSFTETWTFSRLISAKEITWEPATTQECNGAFHNLCKNKAGCVSEDLEIEPEFSWARTEIREVKHLSIETLTMSAYLHQGAGKVLIDGVAVPISKKTHNNGDFTYVWDDVPISEVCPWKHPISHLSCYKDKEDLDDIYCPSQGISLVNYTKVDTSCPEQIYTDVGGLVFKLGKVDFNDWYPYVIESSDVAVKETISSINMALKMRESVHCHQDCLEIRRRVTYVDGFYYDPLPPAKCRLIGNCSVDSGSVTCNNGTLVWATCGGRRVWIDLKSGRDVKNAVCEKGGRSRISKNQFEGVLNEFHLNNSKFGNILRANEIHSVILKDNEVMDFARVVKSASERSGNFSEGTLINVRQLFRPMINFLRGIEHEIKVVAFSVLALIVGYIIIRIRTVTVAKAKSLESIAMI</sequence>
<gene>
    <name type="primary">G</name>
</gene>
<keyword id="KW-0325">Glycoprotein</keyword>
<keyword id="KW-0945">Host-virus interaction</keyword>
<keyword id="KW-0472">Membrane</keyword>
<keyword id="KW-1185">Reference proteome</keyword>
<keyword id="KW-0732">Signal</keyword>
<keyword id="KW-0812">Transmembrane</keyword>
<keyword id="KW-1133">Transmembrane helix</keyword>
<keyword id="KW-1161">Viral attachment to host cell</keyword>
<keyword id="KW-0261">Viral envelope protein</keyword>
<keyword id="KW-0946">Virion</keyword>
<keyword id="KW-1160">Virus entry into host cell</keyword>
<dbReference type="EMBL" id="AB030277">
    <property type="protein sequence ID" value="BAA95351.1"/>
    <property type="molecule type" value="Genomic_RNA"/>
</dbReference>
<dbReference type="RefSeq" id="NP_057961.1">
    <property type="nucleotide sequence ID" value="NC_002251.1"/>
</dbReference>
<dbReference type="GeneID" id="1457722"/>
<dbReference type="KEGG" id="vg:1457722"/>
<dbReference type="OrthoDB" id="30665at10239"/>
<dbReference type="Proteomes" id="UP000007785">
    <property type="component" value="Genome"/>
</dbReference>
<dbReference type="GO" id="GO:0016020">
    <property type="term" value="C:membrane"/>
    <property type="evidence" value="ECO:0007669"/>
    <property type="project" value="UniProtKB-KW"/>
</dbReference>
<dbReference type="GO" id="GO:0019031">
    <property type="term" value="C:viral envelope"/>
    <property type="evidence" value="ECO:0007669"/>
    <property type="project" value="UniProtKB-KW"/>
</dbReference>
<dbReference type="GO" id="GO:0055036">
    <property type="term" value="C:virion membrane"/>
    <property type="evidence" value="ECO:0007669"/>
    <property type="project" value="UniProtKB-SubCell"/>
</dbReference>
<dbReference type="GO" id="GO:0046718">
    <property type="term" value="P:symbiont entry into host cell"/>
    <property type="evidence" value="ECO:0007669"/>
    <property type="project" value="UniProtKB-KW"/>
</dbReference>
<dbReference type="GO" id="GO:0019062">
    <property type="term" value="P:virion attachment to host cell"/>
    <property type="evidence" value="ECO:0007669"/>
    <property type="project" value="UniProtKB-KW"/>
</dbReference>
<comment type="function">
    <text evidence="1">Attaches the virus to host cellular receptor, inducing endocytosis of the virion. In the endosome, the acidic pH induces conformational changes in the glycoprotein trimer, which trigger fusion between virus and cell membrane (By similarity).</text>
</comment>
<comment type="subunit">
    <text evidence="1">Homotrimer. Interacts with matrix protein (By similarity).</text>
</comment>
<comment type="subcellular location">
    <subcellularLocation>
        <location evidence="1">Virion membrane</location>
        <topology evidence="1">Single-pass type I membrane protein</topology>
    </subcellularLocation>
</comment>
<comment type="PTM">
    <text evidence="1">Glycosylatedby host. Glycosylation is crucial for glycoprotein export at the cell surface (By similarity).</text>
</comment>
<comment type="similarity">
    <text evidence="3">Belongs to the cytorhabdovirus glycoprotein family.</text>
</comment>